<name>DUOX1_RAT</name>
<reference key="1">
    <citation type="journal article" date="2003" name="Endocrinology">
        <title>Identification of a truncated dual oxidase 2 (DUOX2) messenger ribonucleic acid (mRNA) in two rat thyroid cell lines. Insulin and forskolin regulation of DUOX2 mRNA levels in FRTL-5 cells and porcine thyrocytes.</title>
        <authorList>
            <person name="Morand S."/>
            <person name="Dos Santos O.F."/>
            <person name="Ohayon R."/>
            <person name="Kaniewski J."/>
            <person name="Noel-Hudson M.-S."/>
            <person name="Virion A."/>
            <person name="Dupuy C."/>
        </authorList>
    </citation>
    <scope>NUCLEOTIDE SEQUENCE [MRNA]</scope>
    <source>
        <strain>Fischer 344</strain>
    </source>
</reference>
<reference key="2">
    <citation type="journal article" date="2000" name="J. Biol. Chem.">
        <title>Cloning of two human thyroid cDNAs encoding new members of the NADPH oxidase family.</title>
        <authorList>
            <person name="De Deken X."/>
            <person name="Wang D."/>
            <person name="Many M.-C."/>
            <person name="Costagliola S."/>
            <person name="Libert F."/>
            <person name="Vassart G."/>
            <person name="Dumont J.E."/>
            <person name="Miot F."/>
        </authorList>
    </citation>
    <scope>TISSUE SPECIFICITY</scope>
</reference>
<proteinExistence type="evidence at protein level"/>
<protein>
    <recommendedName>
        <fullName>Dual oxidase 1</fullName>
        <ecNumber>1.11.1.-</ecNumber>
        <ecNumber>1.6.3.1</ecNumber>
    </recommendedName>
</protein>
<gene>
    <name type="primary">Duox1</name>
</gene>
<comment type="function">
    <text>Generates hydrogen peroxide which is required for the activity of thyroid peroxidase/TPO and lactoperoxidase/LPO. Plays a role in thyroid hormones synthesis and lactoperoxidase-mediated antimicrobial defense at the surface of mucosa. May have its own peroxidase activity through its N-terminal peroxidase-like domain.</text>
</comment>
<comment type="catalytic activity">
    <reaction>
        <text>NADH + O2 + H(+) = H2O2 + NAD(+)</text>
        <dbReference type="Rhea" id="RHEA:11264"/>
        <dbReference type="ChEBI" id="CHEBI:15378"/>
        <dbReference type="ChEBI" id="CHEBI:15379"/>
        <dbReference type="ChEBI" id="CHEBI:16240"/>
        <dbReference type="ChEBI" id="CHEBI:57540"/>
        <dbReference type="ChEBI" id="CHEBI:57945"/>
        <dbReference type="EC" id="1.6.3.1"/>
    </reaction>
</comment>
<comment type="catalytic activity">
    <reaction>
        <text>NADPH + O2 + H(+) = H2O2 + NADP(+)</text>
        <dbReference type="Rhea" id="RHEA:11260"/>
        <dbReference type="ChEBI" id="CHEBI:15378"/>
        <dbReference type="ChEBI" id="CHEBI:15379"/>
        <dbReference type="ChEBI" id="CHEBI:16240"/>
        <dbReference type="ChEBI" id="CHEBI:57783"/>
        <dbReference type="ChEBI" id="CHEBI:58349"/>
        <dbReference type="EC" id="1.6.3.1"/>
    </reaction>
</comment>
<comment type="activity regulation">
    <text evidence="1">The NADPH oxidase activity is calcium-dependent. Peroxidase activity is inhibited by aminobenzohydrazide (By similarity).</text>
</comment>
<comment type="pathway">
    <text>Hormone biosynthesis; thyroid hormone biosynthesis.</text>
</comment>
<comment type="subunit">
    <text evidence="1">Interacts with TXNDC11, TPO and CYBA.</text>
</comment>
<comment type="subcellular location">
    <subcellularLocation>
        <location evidence="1">Apical cell membrane</location>
        <topology evidence="1">Multi-pass membrane protein</topology>
    </subcellularLocation>
    <text evidence="1">Localizes to the apical membrane of epithelial cells.</text>
</comment>
<comment type="tissue specificity">
    <text evidence="5">Expressed in thyrocytes (at protein level).</text>
</comment>
<comment type="PTM">
    <text evidence="1">N-glycosylated.</text>
</comment>
<comment type="similarity">
    <text evidence="6">In the N-terminal section; belongs to the peroxidase family.</text>
</comment>
<organism>
    <name type="scientific">Rattus norvegicus</name>
    <name type="common">Rat</name>
    <dbReference type="NCBI Taxonomy" id="10116"/>
    <lineage>
        <taxon>Eukaryota</taxon>
        <taxon>Metazoa</taxon>
        <taxon>Chordata</taxon>
        <taxon>Craniata</taxon>
        <taxon>Vertebrata</taxon>
        <taxon>Euteleostomi</taxon>
        <taxon>Mammalia</taxon>
        <taxon>Eutheria</taxon>
        <taxon>Euarchontoglires</taxon>
        <taxon>Glires</taxon>
        <taxon>Rodentia</taxon>
        <taxon>Myomorpha</taxon>
        <taxon>Muroidea</taxon>
        <taxon>Muridae</taxon>
        <taxon>Murinae</taxon>
        <taxon>Rattus</taxon>
    </lineage>
</organism>
<keyword id="KW-0106">Calcium</keyword>
<keyword id="KW-1003">Cell membrane</keyword>
<keyword id="KW-0274">FAD</keyword>
<keyword id="KW-0285">Flavoprotein</keyword>
<keyword id="KW-0325">Glycoprotein</keyword>
<keyword id="KW-0376">Hydrogen peroxide</keyword>
<keyword id="KW-0472">Membrane</keyword>
<keyword id="KW-0479">Metal-binding</keyword>
<keyword id="KW-0521">NADP</keyword>
<keyword id="KW-0560">Oxidoreductase</keyword>
<keyword id="KW-0575">Peroxidase</keyword>
<keyword id="KW-1185">Reference proteome</keyword>
<keyword id="KW-0677">Repeat</keyword>
<keyword id="KW-0732">Signal</keyword>
<keyword id="KW-0893">Thyroid hormones biosynthesis</keyword>
<keyword id="KW-0812">Transmembrane</keyword>
<keyword id="KW-1133">Transmembrane helix</keyword>
<feature type="signal peptide" evidence="2">
    <location>
        <begin position="1"/>
        <end position="21"/>
    </location>
</feature>
<feature type="chain" id="PRO_0000223346" description="Dual oxidase 1">
    <location>
        <begin position="22"/>
        <end position="1551"/>
    </location>
</feature>
<feature type="topological domain" description="Extracellular" evidence="2">
    <location>
        <begin position="22"/>
        <end position="596"/>
    </location>
</feature>
<feature type="transmembrane region" description="Helical" evidence="2">
    <location>
        <begin position="597"/>
        <end position="617"/>
    </location>
</feature>
<feature type="topological domain" description="Cytoplasmic" evidence="2">
    <location>
        <begin position="618"/>
        <end position="1044"/>
    </location>
</feature>
<feature type="transmembrane region" description="Helical" evidence="2">
    <location>
        <begin position="1045"/>
        <end position="1065"/>
    </location>
</feature>
<feature type="topological domain" description="Extracellular" evidence="2">
    <location>
        <begin position="1066"/>
        <end position="1080"/>
    </location>
</feature>
<feature type="transmembrane region" description="Helical" evidence="2">
    <location>
        <begin position="1081"/>
        <end position="1101"/>
    </location>
</feature>
<feature type="topological domain" description="Cytoplasmic" evidence="2">
    <location>
        <begin position="1102"/>
        <end position="1136"/>
    </location>
</feature>
<feature type="transmembrane region" description="Helical" evidence="2">
    <location>
        <begin position="1137"/>
        <end position="1157"/>
    </location>
</feature>
<feature type="topological domain" description="Extracellular" evidence="2">
    <location>
        <begin position="1158"/>
        <end position="1188"/>
    </location>
</feature>
<feature type="transmembrane region" description="Helical" evidence="2">
    <location>
        <begin position="1189"/>
        <end position="1209"/>
    </location>
</feature>
<feature type="topological domain" description="Cytoplasmic" evidence="2">
    <location>
        <begin position="1210"/>
        <end position="1226"/>
    </location>
</feature>
<feature type="transmembrane region" description="Helical" evidence="2">
    <location>
        <begin position="1227"/>
        <end position="1247"/>
    </location>
</feature>
<feature type="topological domain" description="Extracellular" evidence="2">
    <location>
        <position position="1248"/>
    </location>
</feature>
<feature type="transmembrane region" description="Helical" evidence="2">
    <location>
        <begin position="1249"/>
        <end position="1269"/>
    </location>
</feature>
<feature type="topological domain" description="Cytoplasmic" evidence="2">
    <location>
        <begin position="1270"/>
        <end position="1551"/>
    </location>
</feature>
<feature type="domain" description="EF-hand 1" evidence="3">
    <location>
        <begin position="815"/>
        <end position="850"/>
    </location>
</feature>
<feature type="domain" description="EF-hand 2" evidence="3">
    <location>
        <begin position="851"/>
        <end position="886"/>
    </location>
</feature>
<feature type="domain" description="EF-hand 3" evidence="3">
    <location>
        <begin position="895"/>
        <end position="930"/>
    </location>
</feature>
<feature type="domain" description="Ferric oxidoreductase">
    <location>
        <begin position="1087"/>
        <end position="1269"/>
    </location>
</feature>
<feature type="domain" description="FAD-binding FR-type" evidence="4">
    <location>
        <begin position="1270"/>
        <end position="1376"/>
    </location>
</feature>
<feature type="region of interest" description="Peroxidase-like; mediates peroxidase activity" evidence="1">
    <location>
        <begin position="26"/>
        <end position="593"/>
    </location>
</feature>
<feature type="region of interest" description="Interaction with TXNDC11" evidence="1">
    <location>
        <begin position="956"/>
        <end position="1248"/>
    </location>
</feature>
<feature type="binding site" evidence="3">
    <location>
        <position position="828"/>
    </location>
    <ligand>
        <name>Ca(2+)</name>
        <dbReference type="ChEBI" id="CHEBI:29108"/>
        <label>1</label>
    </ligand>
</feature>
<feature type="binding site" evidence="3">
    <location>
        <position position="830"/>
    </location>
    <ligand>
        <name>Ca(2+)</name>
        <dbReference type="ChEBI" id="CHEBI:29108"/>
        <label>1</label>
    </ligand>
</feature>
<feature type="binding site" evidence="3">
    <location>
        <position position="832"/>
    </location>
    <ligand>
        <name>Ca(2+)</name>
        <dbReference type="ChEBI" id="CHEBI:29108"/>
        <label>1</label>
    </ligand>
</feature>
<feature type="binding site" evidence="3">
    <location>
        <position position="834"/>
    </location>
    <ligand>
        <name>Ca(2+)</name>
        <dbReference type="ChEBI" id="CHEBI:29108"/>
        <label>1</label>
    </ligand>
</feature>
<feature type="binding site" evidence="3">
    <location>
        <position position="839"/>
    </location>
    <ligand>
        <name>Ca(2+)</name>
        <dbReference type="ChEBI" id="CHEBI:29108"/>
        <label>1</label>
    </ligand>
</feature>
<feature type="binding site" evidence="3">
    <location>
        <position position="864"/>
    </location>
    <ligand>
        <name>Ca(2+)</name>
        <dbReference type="ChEBI" id="CHEBI:29108"/>
        <label>2</label>
    </ligand>
</feature>
<feature type="binding site" evidence="3">
    <location>
        <position position="866"/>
    </location>
    <ligand>
        <name>Ca(2+)</name>
        <dbReference type="ChEBI" id="CHEBI:29108"/>
        <label>2</label>
    </ligand>
</feature>
<feature type="binding site" evidence="3">
    <location>
        <position position="868"/>
    </location>
    <ligand>
        <name>Ca(2+)</name>
        <dbReference type="ChEBI" id="CHEBI:29108"/>
        <label>2</label>
    </ligand>
</feature>
<feature type="binding site" evidence="3">
    <location>
        <position position="875"/>
    </location>
    <ligand>
        <name>Ca(2+)</name>
        <dbReference type="ChEBI" id="CHEBI:29108"/>
        <label>2</label>
    </ligand>
</feature>
<feature type="glycosylation site" description="N-linked (GlcNAc...) asparagine" evidence="2">
    <location>
        <position position="94"/>
    </location>
</feature>
<feature type="glycosylation site" description="N-linked (GlcNAc...) asparagine" evidence="2">
    <location>
        <position position="342"/>
    </location>
</feature>
<feature type="glycosylation site" description="N-linked (GlcNAc...) asparagine" evidence="2">
    <location>
        <position position="354"/>
    </location>
</feature>
<feature type="glycosylation site" description="N-linked (GlcNAc...) asparagine" evidence="2">
    <location>
        <position position="461"/>
    </location>
</feature>
<feature type="glycosylation site" description="N-linked (GlcNAc...) asparagine" evidence="2">
    <location>
        <position position="534"/>
    </location>
</feature>
<dbReference type="EC" id="1.11.1.-"/>
<dbReference type="EC" id="1.6.3.1"/>
<dbReference type="EMBL" id="AF542180">
    <property type="protein sequence ID" value="AAN33120.1"/>
    <property type="molecule type" value="mRNA"/>
</dbReference>
<dbReference type="RefSeq" id="NP_714961.1">
    <property type="nucleotide sequence ID" value="NM_153739.1"/>
</dbReference>
<dbReference type="SMR" id="Q8CIY2"/>
<dbReference type="FunCoup" id="Q8CIY2">
    <property type="interactions" value="4"/>
</dbReference>
<dbReference type="STRING" id="10116.ENSRNOP00000045928"/>
<dbReference type="PeroxiBase" id="3970">
    <property type="entry name" value="RnoDuOx01"/>
</dbReference>
<dbReference type="GlyCosmos" id="Q8CIY2">
    <property type="glycosylation" value="5 sites, No reported glycans"/>
</dbReference>
<dbReference type="GlyGen" id="Q8CIY2">
    <property type="glycosylation" value="5 sites"/>
</dbReference>
<dbReference type="PhosphoSitePlus" id="Q8CIY2"/>
<dbReference type="PaxDb" id="10116-ENSRNOP00000045928"/>
<dbReference type="GeneID" id="266807"/>
<dbReference type="KEGG" id="rno:266807"/>
<dbReference type="UCSC" id="RGD:628760">
    <property type="organism name" value="rat"/>
</dbReference>
<dbReference type="AGR" id="RGD:628760"/>
<dbReference type="CTD" id="53905"/>
<dbReference type="RGD" id="628760">
    <property type="gene designation" value="Duox1"/>
</dbReference>
<dbReference type="eggNOG" id="KOG0039">
    <property type="taxonomic scope" value="Eukaryota"/>
</dbReference>
<dbReference type="InParanoid" id="Q8CIY2"/>
<dbReference type="PhylomeDB" id="Q8CIY2"/>
<dbReference type="Reactome" id="R-RNO-209968">
    <property type="pathway name" value="Thyroxine biosynthesis"/>
</dbReference>
<dbReference type="UniPathway" id="UPA00194"/>
<dbReference type="PRO" id="PR:Q8CIY2"/>
<dbReference type="Proteomes" id="UP000002494">
    <property type="component" value="Unplaced"/>
</dbReference>
<dbReference type="GO" id="GO:0016324">
    <property type="term" value="C:apical plasma membrane"/>
    <property type="evidence" value="ECO:0007669"/>
    <property type="project" value="UniProtKB-SubCell"/>
</dbReference>
<dbReference type="GO" id="GO:0031252">
    <property type="term" value="C:cell leading edge"/>
    <property type="evidence" value="ECO:0000266"/>
    <property type="project" value="RGD"/>
</dbReference>
<dbReference type="GO" id="GO:0009986">
    <property type="term" value="C:cell surface"/>
    <property type="evidence" value="ECO:0000266"/>
    <property type="project" value="RGD"/>
</dbReference>
<dbReference type="GO" id="GO:0005783">
    <property type="term" value="C:endoplasmic reticulum"/>
    <property type="evidence" value="ECO:0000250"/>
    <property type="project" value="UniProtKB"/>
</dbReference>
<dbReference type="GO" id="GO:0043020">
    <property type="term" value="C:NADPH oxidase complex"/>
    <property type="evidence" value="ECO:0000318"/>
    <property type="project" value="GO_Central"/>
</dbReference>
<dbReference type="GO" id="GO:0005886">
    <property type="term" value="C:plasma membrane"/>
    <property type="evidence" value="ECO:0000250"/>
    <property type="project" value="UniProtKB"/>
</dbReference>
<dbReference type="GO" id="GO:0005509">
    <property type="term" value="F:calcium ion binding"/>
    <property type="evidence" value="ECO:0007669"/>
    <property type="project" value="InterPro"/>
</dbReference>
<dbReference type="GO" id="GO:0020037">
    <property type="term" value="F:heme binding"/>
    <property type="evidence" value="ECO:0007669"/>
    <property type="project" value="InterPro"/>
</dbReference>
<dbReference type="GO" id="GO:0106293">
    <property type="term" value="F:NADH oxidase H202-forming activity"/>
    <property type="evidence" value="ECO:0007669"/>
    <property type="project" value="RHEA"/>
</dbReference>
<dbReference type="GO" id="GO:0106294">
    <property type="term" value="F:NADPH oxidase H202-forming activity"/>
    <property type="evidence" value="ECO:0007669"/>
    <property type="project" value="RHEA"/>
</dbReference>
<dbReference type="GO" id="GO:0004601">
    <property type="term" value="F:peroxidase activity"/>
    <property type="evidence" value="ECO:0007669"/>
    <property type="project" value="UniProtKB-KW"/>
</dbReference>
<dbReference type="GO" id="GO:0016175">
    <property type="term" value="F:superoxide-generating NAD(P)H oxidase activity"/>
    <property type="evidence" value="ECO:0000318"/>
    <property type="project" value="GO_Central"/>
</dbReference>
<dbReference type="GO" id="GO:0042335">
    <property type="term" value="P:cuticle development"/>
    <property type="evidence" value="ECO:0000250"/>
    <property type="project" value="UniProtKB"/>
</dbReference>
<dbReference type="GO" id="GO:0019221">
    <property type="term" value="P:cytokine-mediated signaling pathway"/>
    <property type="evidence" value="ECO:0000250"/>
    <property type="project" value="UniProtKB"/>
</dbReference>
<dbReference type="GO" id="GO:0006952">
    <property type="term" value="P:defense response"/>
    <property type="evidence" value="ECO:0000318"/>
    <property type="project" value="GO_Central"/>
</dbReference>
<dbReference type="GO" id="GO:0042446">
    <property type="term" value="P:hormone biosynthetic process"/>
    <property type="evidence" value="ECO:0007669"/>
    <property type="project" value="UniProtKB-KW"/>
</dbReference>
<dbReference type="GO" id="GO:0050665">
    <property type="term" value="P:hydrogen peroxide biosynthetic process"/>
    <property type="evidence" value="ECO:0000266"/>
    <property type="project" value="RGD"/>
</dbReference>
<dbReference type="GO" id="GO:0042744">
    <property type="term" value="P:hydrogen peroxide catabolic process"/>
    <property type="evidence" value="ECO:0007669"/>
    <property type="project" value="UniProtKB-KW"/>
</dbReference>
<dbReference type="GO" id="GO:2000147">
    <property type="term" value="P:positive regulation of cell motility"/>
    <property type="evidence" value="ECO:0000266"/>
    <property type="project" value="RGD"/>
</dbReference>
<dbReference type="GO" id="GO:0090303">
    <property type="term" value="P:positive regulation of wound healing"/>
    <property type="evidence" value="ECO:0000266"/>
    <property type="project" value="RGD"/>
</dbReference>
<dbReference type="GO" id="GO:0072593">
    <property type="term" value="P:reactive oxygen species metabolic process"/>
    <property type="evidence" value="ECO:0000266"/>
    <property type="project" value="RGD"/>
</dbReference>
<dbReference type="GO" id="GO:0051591">
    <property type="term" value="P:response to cAMP"/>
    <property type="evidence" value="ECO:0000250"/>
    <property type="project" value="UniProtKB"/>
</dbReference>
<dbReference type="GO" id="GO:0006979">
    <property type="term" value="P:response to oxidative stress"/>
    <property type="evidence" value="ECO:0007669"/>
    <property type="project" value="InterPro"/>
</dbReference>
<dbReference type="GO" id="GO:0042554">
    <property type="term" value="P:superoxide anion generation"/>
    <property type="evidence" value="ECO:0000318"/>
    <property type="project" value="GO_Central"/>
</dbReference>
<dbReference type="GO" id="GO:0006590">
    <property type="term" value="P:thyroid hormone generation"/>
    <property type="evidence" value="ECO:0007669"/>
    <property type="project" value="UniProtKB-UniPathway"/>
</dbReference>
<dbReference type="CDD" id="cd09820">
    <property type="entry name" value="dual_peroxidase_like"/>
    <property type="match status" value="1"/>
</dbReference>
<dbReference type="CDD" id="cd00051">
    <property type="entry name" value="EFh"/>
    <property type="match status" value="2"/>
</dbReference>
<dbReference type="CDD" id="cd06186">
    <property type="entry name" value="NOX_Duox_like_FAD_NADP"/>
    <property type="match status" value="1"/>
</dbReference>
<dbReference type="FunFam" id="2.40.30.10:FF:000043">
    <property type="entry name" value="dual oxidase 1"/>
    <property type="match status" value="1"/>
</dbReference>
<dbReference type="FunFam" id="1.10.640.10:FF:000004">
    <property type="entry name" value="Dual oxidase 2"/>
    <property type="match status" value="1"/>
</dbReference>
<dbReference type="FunFam" id="3.40.50.80:FF:000006">
    <property type="entry name" value="Dual oxidase 2"/>
    <property type="match status" value="1"/>
</dbReference>
<dbReference type="FunFam" id="1.10.238.10:FF:000095">
    <property type="entry name" value="dual oxidase 2"/>
    <property type="match status" value="1"/>
</dbReference>
<dbReference type="Gene3D" id="1.10.238.10">
    <property type="entry name" value="EF-hand"/>
    <property type="match status" value="1"/>
</dbReference>
<dbReference type="Gene3D" id="1.10.640.10">
    <property type="entry name" value="Haem peroxidase domain superfamily, animal type"/>
    <property type="match status" value="1"/>
</dbReference>
<dbReference type="Gene3D" id="3.40.50.80">
    <property type="entry name" value="Nucleotide-binding domain of ferredoxin-NADP reductase (FNR) module"/>
    <property type="match status" value="1"/>
</dbReference>
<dbReference type="Gene3D" id="2.40.30.10">
    <property type="entry name" value="Translation factors"/>
    <property type="match status" value="1"/>
</dbReference>
<dbReference type="InterPro" id="IPR034821">
    <property type="entry name" value="DUOX_peroxidase"/>
</dbReference>
<dbReference type="InterPro" id="IPR011992">
    <property type="entry name" value="EF-hand-dom_pair"/>
</dbReference>
<dbReference type="InterPro" id="IPR018247">
    <property type="entry name" value="EF_Hand_1_Ca_BS"/>
</dbReference>
<dbReference type="InterPro" id="IPR002048">
    <property type="entry name" value="EF_hand_dom"/>
</dbReference>
<dbReference type="InterPro" id="IPR013112">
    <property type="entry name" value="FAD-bd_8"/>
</dbReference>
<dbReference type="InterPro" id="IPR017927">
    <property type="entry name" value="FAD-bd_FR_type"/>
</dbReference>
<dbReference type="InterPro" id="IPR013130">
    <property type="entry name" value="Fe3_Rdtase_TM_dom"/>
</dbReference>
<dbReference type="InterPro" id="IPR013121">
    <property type="entry name" value="Fe_red_NAD-bd_6"/>
</dbReference>
<dbReference type="InterPro" id="IPR039261">
    <property type="entry name" value="FNR_nucleotide-bd"/>
</dbReference>
<dbReference type="InterPro" id="IPR019791">
    <property type="entry name" value="Haem_peroxidase_animal"/>
</dbReference>
<dbReference type="InterPro" id="IPR010255">
    <property type="entry name" value="Haem_peroxidase_sf"/>
</dbReference>
<dbReference type="InterPro" id="IPR037120">
    <property type="entry name" value="Haem_peroxidase_sf_animal"/>
</dbReference>
<dbReference type="InterPro" id="IPR050369">
    <property type="entry name" value="RBOH/FRE"/>
</dbReference>
<dbReference type="InterPro" id="IPR017938">
    <property type="entry name" value="Riboflavin_synthase-like_b-brl"/>
</dbReference>
<dbReference type="PANTHER" id="PTHR11972:SF75">
    <property type="entry name" value="DUAL OXIDASE 1"/>
    <property type="match status" value="1"/>
</dbReference>
<dbReference type="PANTHER" id="PTHR11972">
    <property type="entry name" value="NADPH OXIDASE"/>
    <property type="match status" value="1"/>
</dbReference>
<dbReference type="Pfam" id="PF03098">
    <property type="entry name" value="An_peroxidase"/>
    <property type="match status" value="1"/>
</dbReference>
<dbReference type="Pfam" id="PF00036">
    <property type="entry name" value="EF-hand_1"/>
    <property type="match status" value="1"/>
</dbReference>
<dbReference type="Pfam" id="PF13499">
    <property type="entry name" value="EF-hand_7"/>
    <property type="match status" value="1"/>
</dbReference>
<dbReference type="Pfam" id="PF08022">
    <property type="entry name" value="FAD_binding_8"/>
    <property type="match status" value="1"/>
</dbReference>
<dbReference type="Pfam" id="PF01794">
    <property type="entry name" value="Ferric_reduct"/>
    <property type="match status" value="1"/>
</dbReference>
<dbReference type="Pfam" id="PF08030">
    <property type="entry name" value="NAD_binding_6"/>
    <property type="match status" value="1"/>
</dbReference>
<dbReference type="PRINTS" id="PR00457">
    <property type="entry name" value="ANPEROXIDASE"/>
</dbReference>
<dbReference type="SFLD" id="SFLDS00052">
    <property type="entry name" value="Ferric_Reductase_Domain"/>
    <property type="match status" value="1"/>
</dbReference>
<dbReference type="SFLD" id="SFLDG01168">
    <property type="entry name" value="Ferric_reductase_subgroup_(FRE"/>
    <property type="match status" value="1"/>
</dbReference>
<dbReference type="SFLD" id="SFLDG01169">
    <property type="entry name" value="NADPH_oxidase_subgroup_(NOX)"/>
    <property type="match status" value="1"/>
</dbReference>
<dbReference type="SMART" id="SM00054">
    <property type="entry name" value="EFh"/>
    <property type="match status" value="2"/>
</dbReference>
<dbReference type="SUPFAM" id="SSF47473">
    <property type="entry name" value="EF-hand"/>
    <property type="match status" value="1"/>
</dbReference>
<dbReference type="SUPFAM" id="SSF52343">
    <property type="entry name" value="Ferredoxin reductase-like, C-terminal NADP-linked domain"/>
    <property type="match status" value="1"/>
</dbReference>
<dbReference type="SUPFAM" id="SSF48113">
    <property type="entry name" value="Heme-dependent peroxidases"/>
    <property type="match status" value="1"/>
</dbReference>
<dbReference type="SUPFAM" id="SSF63380">
    <property type="entry name" value="Riboflavin synthase domain-like"/>
    <property type="match status" value="1"/>
</dbReference>
<dbReference type="PROSITE" id="PS00018">
    <property type="entry name" value="EF_HAND_1"/>
    <property type="match status" value="2"/>
</dbReference>
<dbReference type="PROSITE" id="PS50222">
    <property type="entry name" value="EF_HAND_2"/>
    <property type="match status" value="3"/>
</dbReference>
<dbReference type="PROSITE" id="PS51384">
    <property type="entry name" value="FAD_FR"/>
    <property type="match status" value="1"/>
</dbReference>
<dbReference type="PROSITE" id="PS50292">
    <property type="entry name" value="PEROXIDASE_3"/>
    <property type="match status" value="1"/>
</dbReference>
<evidence type="ECO:0000250" key="1"/>
<evidence type="ECO:0000255" key="2"/>
<evidence type="ECO:0000255" key="3">
    <source>
        <dbReference type="PROSITE-ProRule" id="PRU00448"/>
    </source>
</evidence>
<evidence type="ECO:0000255" key="4">
    <source>
        <dbReference type="PROSITE-ProRule" id="PRU00716"/>
    </source>
</evidence>
<evidence type="ECO:0000269" key="5">
    <source>
    </source>
</evidence>
<evidence type="ECO:0000305" key="6"/>
<sequence>MAVYSAVAWILLFGVLASLGAQNPVSWEVQRFDGWYNNLMEHRWGSKGSRLQRLVPASYADGVYQPLREPYLPNPRHLSNRVMRGPAGQPSLRNRTVLGVFFGYHVLSDLVSVETPGCPAEFLNIYIPRGDPVFDPDKRGNVVLPFQRSRWDRSTGQSPSNPRDLTNQVTGWLDGSAIYGSSHSWSDTLRSFSGGQLASGPDPAFPRNSQNSLLMWMAPDPATGQGGPQGLYAFGAQRGNREPFLQALGLLWFRYHNLCAKRLAQEHPHWGDEELFQHARKRVIATYQNIAMYEWLPSFLKQTPPEYPGYHPFLDPSISPEFVVASEQFLSTMVPPGVYMRNASCHFQGIANRNSSVSGALRVCNSYWSRENPKLQRAEDVDALLLGMASQIAEREDHLVVEDVQDFWPGPLKFSRTDYLASCLQRGRDLGLPSYTKAREALGLPPVSHWQDINPALSRSNGTVLEATAALYNQDLSRLELLAGGLLESHGDPGPLFSAIVLDQFVRLRDGDRYWFENNRNGLFSKEEIAEIRNTSLRDILVAVTNVDPSALQPSVFFWLAGDPCPQPSQLSTQGLPACAPLFVRDYFKGSGFGFGLTIGTLCCFPLVSLLSAWIVARLRMRNFKRLQRQDRQSIMCEKLVGGVEALEWQGRKEPCRPVLVHLQPGQIRVVDGRLTVLRTIQLRPPQQVNLILSSNRGRRTLLLKIPKEYDLVLLFNMEEERQALVENIRAALKENGLSFQEWELREQELMRAAVTRQQRGHLLETFFRHLFSQVLDINQADAGTLPLDSSTKVREALTCELSRAEFADSLGLKPQDMFVESMFSLADKDGNGYLSFREFLDILVVFMKGSPEEKSRLMFRMYDFDGNGLISKDEFIRMLRSFIEISNNCLSKDQLAEVVESMFRESGFQDKEELTWEDFHFMLRDHDSDLRFTQLCVKGVEVPEVIKNLCRRASYISQEKICPSPRMSAHCARNNTKTASSPQRLQCPVDTDPPQEIRRRFGKKVTSFQPLLFTEAHREKFQRSRRHQTVQQFKRFIENYRRHIGCVAVFYTITGALFLERAYYYAFAAHHSGITDTTRVGIILSRGTAASISFMFSYILLTMCRNLITFLRETFLNRYIPFDAAVDFHRFIASTAIILTVLHSAGHVVNVYLFSISPLSVLSCLFPDLFHDDGSEFPQKYYWWFFQTVPGLTGVLLLLALAIMYVFASHHFRRRSFRGFWLTHHLYIFLYILLIIHGSFALIQMPRFHIFFLVPAIIYVGDKLVSLSRKKVEISVVKAELLPSGVTHLRFQRPQGFEYKSGQWVRIACLALGTTEYHPFTLTSAPHEDTLSLHIRAAGPWTTRLREIYSPPTGDTCARYPKLYLDGPFGEGHQEWHKFEVSVLVGAGIGVTPFASILKDLVFKSSVSCQVFCKKIYFIWVTRTQRQFEWLADIIREVEENDSRDLVSVHIYITQLAEKFDLRTTMLYICERHFQKVLNRSLFTGLRSVTHFGRPPFEPFFNSLQEVHPQVRKIGVFSCGPPGMTKNVEKACQLINKQDRTHFSHHYENF</sequence>
<accession>Q8CIY2</accession>